<name>ABP1_RIPCL</name>
<accession>Q27905</accession>
<proteinExistence type="evidence at transcript level"/>
<comment type="function">
    <text>Has antibacterial activity in vitro.</text>
</comment>
<comment type="subcellular location">
    <subcellularLocation>
        <location evidence="3">Secreted</location>
    </subcellularLocation>
</comment>
<reference key="1">
    <citation type="journal article" date="1996" name="Zool. Sci.">
        <title>Cloning of mRNA sequences for two antibacterial peptides in a hemipteran insect, Riptortus clavatus.</title>
        <authorList>
            <person name="Miura K."/>
            <person name="Ueno S."/>
            <person name="Kamiya K."/>
            <person name="Kobayashi J."/>
            <person name="Matsuoka H."/>
            <person name="Ando K."/>
            <person name="Chinzei Y."/>
        </authorList>
    </citation>
    <scope>NUCLEOTIDE SEQUENCE [MRNA]</scope>
    <source>
        <tissue>Fat body</tissue>
    </source>
</reference>
<keyword id="KW-0044">Antibiotic</keyword>
<keyword id="KW-0929">Antimicrobial</keyword>
<keyword id="KW-0325">Glycoprotein</keyword>
<keyword id="KW-0391">Immunity</keyword>
<keyword id="KW-0399">Innate immunity</keyword>
<keyword id="KW-0677">Repeat</keyword>
<keyword id="KW-0964">Secreted</keyword>
<protein>
    <recommendedName>
        <fullName>Probable antibacterial peptide polyprotein</fullName>
    </recommendedName>
</protein>
<evidence type="ECO:0000250" key="1"/>
<evidence type="ECO:0000256" key="2">
    <source>
        <dbReference type="SAM" id="MobiDB-lite"/>
    </source>
</evidence>
<evidence type="ECO:0000305" key="3"/>
<organism>
    <name type="scientific">Riptortus clavatus</name>
    <name type="common">Bean bug</name>
    <dbReference type="NCBI Taxonomy" id="41704"/>
    <lineage>
        <taxon>Eukaryota</taxon>
        <taxon>Metazoa</taxon>
        <taxon>Ecdysozoa</taxon>
        <taxon>Arthropoda</taxon>
        <taxon>Hexapoda</taxon>
        <taxon>Insecta</taxon>
        <taxon>Pterygota</taxon>
        <taxon>Neoptera</taxon>
        <taxon>Paraneoptera</taxon>
        <taxon>Hemiptera</taxon>
        <taxon>Heteroptera</taxon>
        <taxon>Panheteroptera</taxon>
        <taxon>Pentatomomorpha</taxon>
        <taxon>Coreoidea</taxon>
        <taxon>Alydidae</taxon>
        <taxon>Riptortus</taxon>
    </lineage>
</organism>
<dbReference type="EMBL" id="D49415">
    <property type="protein sequence ID" value="BAA08395.1"/>
    <property type="molecule type" value="mRNA"/>
</dbReference>
<dbReference type="GO" id="GO:0005576">
    <property type="term" value="C:extracellular region"/>
    <property type="evidence" value="ECO:0007669"/>
    <property type="project" value="UniProtKB-SubCell"/>
</dbReference>
<dbReference type="GO" id="GO:0042742">
    <property type="term" value="P:defense response to bacterium"/>
    <property type="evidence" value="ECO:0007669"/>
    <property type="project" value="UniProtKB-KW"/>
</dbReference>
<dbReference type="GO" id="GO:0045087">
    <property type="term" value="P:innate immune response"/>
    <property type="evidence" value="ECO:0007669"/>
    <property type="project" value="UniProtKB-KW"/>
</dbReference>
<feature type="chain" id="PRO_0000127110" description="Probable antibacterial peptide polyprotein">
    <location>
        <begin position="1"/>
        <end position="678"/>
    </location>
</feature>
<feature type="repeat" description="1">
    <location>
        <begin position="1"/>
        <end position="67"/>
    </location>
</feature>
<feature type="repeat" description="2">
    <location>
        <begin position="68"/>
        <end position="114"/>
    </location>
</feature>
<feature type="repeat" description="3">
    <location>
        <begin position="115"/>
        <end position="161"/>
    </location>
</feature>
<feature type="repeat" description="4">
    <location>
        <begin position="162"/>
        <end position="208"/>
    </location>
</feature>
<feature type="repeat" description="5">
    <location>
        <begin position="209"/>
        <end position="255"/>
    </location>
</feature>
<feature type="repeat" description="6">
    <location>
        <begin position="256"/>
        <end position="302"/>
    </location>
</feature>
<feature type="repeat" description="7">
    <location>
        <begin position="303"/>
        <end position="349"/>
    </location>
</feature>
<feature type="repeat" description="8">
    <location>
        <begin position="350"/>
        <end position="396"/>
    </location>
</feature>
<feature type="repeat" description="9">
    <location>
        <begin position="397"/>
        <end position="443"/>
    </location>
</feature>
<feature type="repeat" description="10">
    <location>
        <begin position="444"/>
        <end position="490"/>
    </location>
</feature>
<feature type="repeat" description="11">
    <location>
        <begin position="491"/>
        <end position="537"/>
    </location>
</feature>
<feature type="repeat" description="12">
    <location>
        <begin position="538"/>
        <end position="584"/>
    </location>
</feature>
<feature type="repeat" description="13">
    <location>
        <begin position="585"/>
        <end position="631"/>
    </location>
</feature>
<feature type="repeat" description="14">
    <location>
        <begin position="632"/>
        <end position="678"/>
    </location>
</feature>
<feature type="region of interest" description="14 X approximate tandem repeats">
    <location>
        <begin position="1"/>
        <end position="678"/>
    </location>
</feature>
<feature type="region of interest" description="Disordered" evidence="2">
    <location>
        <begin position="58"/>
        <end position="97"/>
    </location>
</feature>
<feature type="region of interest" description="Disordered" evidence="2">
    <location>
        <begin position="113"/>
        <end position="678"/>
    </location>
</feature>
<feature type="compositionally biased region" description="Basic and acidic residues" evidence="2">
    <location>
        <begin position="64"/>
        <end position="73"/>
    </location>
</feature>
<feature type="compositionally biased region" description="Low complexity" evidence="2">
    <location>
        <begin position="145"/>
        <end position="157"/>
    </location>
</feature>
<feature type="compositionally biased region" description="Basic and acidic residues" evidence="2">
    <location>
        <begin position="158"/>
        <end position="167"/>
    </location>
</feature>
<feature type="compositionally biased region" description="Low complexity" evidence="2">
    <location>
        <begin position="188"/>
        <end position="204"/>
    </location>
</feature>
<feature type="compositionally biased region" description="Basic and acidic residues" evidence="2">
    <location>
        <begin position="205"/>
        <end position="214"/>
    </location>
</feature>
<feature type="compositionally biased region" description="Basic and acidic residues" evidence="2">
    <location>
        <begin position="299"/>
        <end position="308"/>
    </location>
</feature>
<feature type="compositionally biased region" description="Low complexity" evidence="2">
    <location>
        <begin position="333"/>
        <end position="345"/>
    </location>
</feature>
<feature type="compositionally biased region" description="Basic and acidic residues" evidence="2">
    <location>
        <begin position="346"/>
        <end position="355"/>
    </location>
</feature>
<feature type="compositionally biased region" description="Low complexity" evidence="2">
    <location>
        <begin position="380"/>
        <end position="392"/>
    </location>
</feature>
<feature type="compositionally biased region" description="Basic and acidic residues" evidence="2">
    <location>
        <begin position="393"/>
        <end position="402"/>
    </location>
</feature>
<feature type="compositionally biased region" description="Low complexity" evidence="2">
    <location>
        <begin position="427"/>
        <end position="439"/>
    </location>
</feature>
<feature type="compositionally biased region" description="Basic and acidic residues" evidence="2">
    <location>
        <begin position="440"/>
        <end position="449"/>
    </location>
</feature>
<feature type="compositionally biased region" description="Low complexity" evidence="2">
    <location>
        <begin position="474"/>
        <end position="486"/>
    </location>
</feature>
<feature type="compositionally biased region" description="Basic and acidic residues" evidence="2">
    <location>
        <begin position="487"/>
        <end position="496"/>
    </location>
</feature>
<feature type="compositionally biased region" description="Low complexity" evidence="2">
    <location>
        <begin position="521"/>
        <end position="533"/>
    </location>
</feature>
<feature type="compositionally biased region" description="Basic and acidic residues" evidence="2">
    <location>
        <begin position="534"/>
        <end position="543"/>
    </location>
</feature>
<feature type="compositionally biased region" description="Low complexity" evidence="2">
    <location>
        <begin position="568"/>
        <end position="580"/>
    </location>
</feature>
<feature type="compositionally biased region" description="Basic and acidic residues" evidence="2">
    <location>
        <begin position="581"/>
        <end position="590"/>
    </location>
</feature>
<feature type="compositionally biased region" description="Low complexity" evidence="2">
    <location>
        <begin position="615"/>
        <end position="627"/>
    </location>
</feature>
<feature type="glycosylation site" description="O-linked (GalNAc...) threonine" evidence="1">
    <location>
        <position position="32"/>
    </location>
</feature>
<feature type="glycosylation site" description="O-linked (GalNAc...) threonine" evidence="1">
    <location>
        <position position="83"/>
    </location>
</feature>
<feature type="glycosylation site" description="O-linked (GalNAc...) threonine" evidence="1">
    <location>
        <position position="130"/>
    </location>
</feature>
<feature type="glycosylation site" description="O-linked (GalNAc...) threonine" evidence="1">
    <location>
        <position position="177"/>
    </location>
</feature>
<feature type="glycosylation site" description="O-linked (GalNAc...) threonine" evidence="1">
    <location>
        <position position="224"/>
    </location>
</feature>
<feature type="glycosylation site" description="O-linked (GalNAc...) threonine" evidence="1">
    <location>
        <position position="271"/>
    </location>
</feature>
<feature type="glycosylation site" description="O-linked (GalNAc...) threonine" evidence="1">
    <location>
        <position position="318"/>
    </location>
</feature>
<feature type="glycosylation site" description="O-linked (GalNAc...) threonine" evidence="1">
    <location>
        <position position="365"/>
    </location>
</feature>
<feature type="glycosylation site" description="O-linked (GalNAc...) threonine" evidence="1">
    <location>
        <position position="412"/>
    </location>
</feature>
<feature type="glycosylation site" description="O-linked (GalNAc...) threonine" evidence="1">
    <location>
        <position position="459"/>
    </location>
</feature>
<feature type="glycosylation site" description="O-linked (GalNAc...) threonine" evidence="1">
    <location>
        <position position="506"/>
    </location>
</feature>
<feature type="glycosylation site" description="O-linked (GalNAc...) threonine" evidence="1">
    <location>
        <position position="553"/>
    </location>
</feature>
<feature type="glycosylation site" description="O-linked (GalNAc...) threonine" evidence="1">
    <location>
        <position position="600"/>
    </location>
</feature>
<feature type="glycosylation site" description="O-linked (GalNAc...) threonine" evidence="1">
    <location>
        <position position="647"/>
    </location>
</feature>
<sequence length="678" mass="76368">MRSPRVIHLACVIAYIVAVEAGDKPVYLPRPTPPRPIHPRLAREVGWELEGQGLSPLSEAELLPEVRERRSPVDKGGYLPRPTPPRPVYRSRRDASLESELSPLSVAEVLPEVRERRSPVDKGGYLPRPTPPRPVYRSRRDASLESELSPLSEAEVLPEVRERRSPVDKGGYLPRPTPPRPVYRSRRVASLESELSPLSEAEVLPEVRERRSPVDKGGYLPRPTPPRPVYRSRRDASLESELSPLSEEEVLPEVRERGSPVDKGGYLPRPTPPRPVYRSRRDASLESELSPLSVAEDLPEVRERRSPVDKGGYLPRPTPPRPVYRSRRDASLESELSPLSEAEVLPEVRERRSPVDKGGYLPRPTPPRPVYRSRRDASLESELSPLSEAEVLPEVRERRSPVDKGGYLPRPTPPRPVYRSRRDASLESELSPLSEAEVLPEVRERRSPVDKGGYLPRPTPPRPVYRSRRDASLESELSPLSEAEVLPEVRERRSPVDKGGYLPRPTPPRPVYRSRRDATLESELSPSSEAEVLPEVRERRSPVDKGGYLPRPTPPRPVYRSRRDASLESELSPLSEAEVLPEVRERRSPVDKGGYLPRPTPPRPVYRSRRDASLESELSPLSEAEGLPEVRERRSPGGQGGYLPRPTPRTPLCRSRRDANLDAEQSPVSEGVVLPEVR</sequence>